<reference key="1">
    <citation type="journal article" date="2009" name="PLoS Biol.">
        <title>Lineage-specific biology revealed by a finished genome assembly of the mouse.</title>
        <authorList>
            <person name="Church D.M."/>
            <person name="Goodstadt L."/>
            <person name="Hillier L.W."/>
            <person name="Zody M.C."/>
            <person name="Goldstein S."/>
            <person name="She X."/>
            <person name="Bult C.J."/>
            <person name="Agarwala R."/>
            <person name="Cherry J.L."/>
            <person name="DiCuccio M."/>
            <person name="Hlavina W."/>
            <person name="Kapustin Y."/>
            <person name="Meric P."/>
            <person name="Maglott D."/>
            <person name="Birtle Z."/>
            <person name="Marques A.C."/>
            <person name="Graves T."/>
            <person name="Zhou S."/>
            <person name="Teague B."/>
            <person name="Potamousis K."/>
            <person name="Churas C."/>
            <person name="Place M."/>
            <person name="Herschleb J."/>
            <person name="Runnheim R."/>
            <person name="Forrest D."/>
            <person name="Amos-Landgraf J."/>
            <person name="Schwartz D.C."/>
            <person name="Cheng Z."/>
            <person name="Lindblad-Toh K."/>
            <person name="Eichler E.E."/>
            <person name="Ponting C.P."/>
        </authorList>
    </citation>
    <scope>NUCLEOTIDE SEQUENCE [LARGE SCALE GENOMIC DNA]</scope>
    <source>
        <strain>C57BL/6J</strain>
    </source>
</reference>
<reference key="2">
    <citation type="journal article" date="2004" name="Genome Res.">
        <title>The status, quality, and expansion of the NIH full-length cDNA project: the Mammalian Gene Collection (MGC).</title>
        <authorList>
            <consortium name="The MGC Project Team"/>
        </authorList>
    </citation>
    <scope>NUCLEOTIDE SEQUENCE [LARGE SCALE MRNA]</scope>
    <source>
        <strain>C57BL/6J</strain>
        <tissue>Brain</tissue>
    </source>
</reference>
<reference key="3">
    <citation type="submission" date="2007-04" db="UniProtKB">
        <authorList>
            <person name="Lubec G."/>
            <person name="Kang S.U."/>
        </authorList>
    </citation>
    <scope>PROTEIN SEQUENCE OF 44-63; 87-96; 101-112; 145-157; 164-188; 190-205; 228-245; 270-278; 298-320; 355-366; 377-382; 430-444; 446-453; 457-481; 626-637; 768-780; 799-806; 838-852 AND 857-881</scope>
    <source>
        <strain>C57BL/6J</strain>
        <tissue>Brain</tissue>
    </source>
</reference>
<reference key="4">
    <citation type="journal article" date="2008" name="J. Proteome Res.">
        <title>Large-scale identification and evolution indexing of tyrosine phosphorylation sites from murine brain.</title>
        <authorList>
            <person name="Ballif B.A."/>
            <person name="Carey G.R."/>
            <person name="Sunyaev S.R."/>
            <person name="Gygi S.P."/>
        </authorList>
    </citation>
    <scope>PHOSPHORYLATION [LARGE SCALE ANALYSIS] AT TYR-184; TYR-634; TYR-899; TYR-1206; TYR-1477 AND TYR-1487</scope>
    <scope>IDENTIFICATION BY MASS SPECTROMETRY [LARGE SCALE ANALYSIS]</scope>
    <source>
        <tissue>Brain</tissue>
    </source>
</reference>
<reference key="5">
    <citation type="journal article" date="2010" name="Cell">
        <title>A tissue-specific atlas of mouse protein phosphorylation and expression.</title>
        <authorList>
            <person name="Huttlin E.L."/>
            <person name="Jedrychowski M.P."/>
            <person name="Elias J.E."/>
            <person name="Goswami T."/>
            <person name="Rad R."/>
            <person name="Beausoleil S.A."/>
            <person name="Villen J."/>
            <person name="Haas W."/>
            <person name="Sowa M.E."/>
            <person name="Gygi S.P."/>
        </authorList>
    </citation>
    <scope>PHOSPHORYLATION [LARGE SCALE ANALYSIS] AT SER-67; THR-105; SER-1167 AND SER-1494</scope>
    <scope>IDENTIFICATION BY MASS SPECTROMETRY [LARGE SCALE ANALYSIS]</scope>
    <source>
        <tissue>Brain</tissue>
        <tissue>Brown adipose tissue</tissue>
        <tissue>Heart</tissue>
        <tissue>Kidney</tissue>
        <tissue>Liver</tissue>
        <tissue>Lung</tissue>
        <tissue>Pancreas</tissue>
        <tissue>Spleen</tissue>
        <tissue>Testis</tissue>
    </source>
</reference>
<reference key="6">
    <citation type="journal article" date="2010" name="Proc. Natl. Acad. Sci. U.S.A.">
        <title>Two closely related endocytic proteins that share a common OCRL-binding motif with APPL1.</title>
        <authorList>
            <person name="Swan L.E."/>
            <person name="Tomasini L."/>
            <person name="Pirruccello M."/>
            <person name="Lunardi J."/>
            <person name="De Camilli P."/>
        </authorList>
    </citation>
    <scope>INTERACTION WITH OCRL</scope>
</reference>
<reference key="7">
    <citation type="journal article" date="2013" name="Mol. Cell">
        <title>SIRT5-mediated lysine desuccinylation impacts diverse metabolic pathways.</title>
        <authorList>
            <person name="Park J."/>
            <person name="Chen Y."/>
            <person name="Tishkoff D.X."/>
            <person name="Peng C."/>
            <person name="Tan M."/>
            <person name="Dai L."/>
            <person name="Xie Z."/>
            <person name="Zhang Y."/>
            <person name="Zwaans B.M."/>
            <person name="Skinner M.E."/>
            <person name="Lombard D.B."/>
            <person name="Zhao Y."/>
        </authorList>
    </citation>
    <scope>SUCCINYLATION [LARGE SCALE ANALYSIS] AT LYS-737 AND LYS-1441</scope>
    <scope>IDENTIFICATION BY MASS SPECTROMETRY [LARGE SCALE ANALYSIS]</scope>
    <source>
        <tissue>Embryonic fibroblast</tissue>
    </source>
</reference>
<reference key="8">
    <citation type="journal article" date="2016" name="PLoS ONE">
        <title>USP2-45 is a circadian clock output effector regulating calcium absorption at the post-translational level.</title>
        <authorList>
            <person name="Pouly D."/>
            <person name="Chenaux S."/>
            <person name="Martin V."/>
            <person name="Babis M."/>
            <person name="Koch R."/>
            <person name="Nagoshi E."/>
            <person name="Katanaev V.L."/>
            <person name="Gachon F."/>
            <person name="Staub O."/>
        </authorList>
    </citation>
    <scope>INTERACTION WITH USP2</scope>
</reference>
<keyword id="KW-0002">3D-structure</keyword>
<keyword id="KW-0007">Acetylation</keyword>
<keyword id="KW-0072">Autophagy</keyword>
<keyword id="KW-0131">Cell cycle</keyword>
<keyword id="KW-0132">Cell division</keyword>
<keyword id="KW-0168">Coated pit</keyword>
<keyword id="KW-0963">Cytoplasm</keyword>
<keyword id="KW-0968">Cytoplasmic vesicle</keyword>
<keyword id="KW-0206">Cytoskeleton</keyword>
<keyword id="KW-0903">Direct protein sequencing</keyword>
<keyword id="KW-0472">Membrane</keyword>
<keyword id="KW-0498">Mitosis</keyword>
<keyword id="KW-0597">Phosphoprotein</keyword>
<keyword id="KW-1185">Reference proteome</keyword>
<keyword id="KW-0677">Repeat</keyword>
<dbReference type="EMBL" id="AL592222">
    <property type="status" value="NOT_ANNOTATED_CDS"/>
    <property type="molecule type" value="Genomic_DNA"/>
</dbReference>
<dbReference type="EMBL" id="BC079897">
    <property type="protein sequence ID" value="AAH79897.1"/>
    <property type="molecule type" value="mRNA"/>
</dbReference>
<dbReference type="CCDS" id="CCDS25204.1"/>
<dbReference type="RefSeq" id="NP_001003908.1">
    <property type="nucleotide sequence ID" value="NM_001003908.2"/>
</dbReference>
<dbReference type="PDB" id="5ODS">
    <property type="method" value="X-ray"/>
    <property type="resolution" value="3.09 A"/>
    <property type="chains" value="A/B/C/D=1-574"/>
</dbReference>
<dbReference type="PDBsum" id="5ODS"/>
<dbReference type="SMR" id="Q68FD5"/>
<dbReference type="BioGRID" id="212086">
    <property type="interactions" value="73"/>
</dbReference>
<dbReference type="CORUM" id="Q68FD5"/>
<dbReference type="DIP" id="DIP-31947N"/>
<dbReference type="FunCoup" id="Q68FD5">
    <property type="interactions" value="3734"/>
</dbReference>
<dbReference type="IntAct" id="Q68FD5">
    <property type="interactions" value="28"/>
</dbReference>
<dbReference type="MINT" id="Q68FD5"/>
<dbReference type="STRING" id="10090.ENSMUSP00000099475"/>
<dbReference type="GlyGen" id="Q68FD5">
    <property type="glycosylation" value="6 sites, 5 N-linked glycans (5 sites), 1 O-linked glycan (1 site)"/>
</dbReference>
<dbReference type="iPTMnet" id="Q68FD5"/>
<dbReference type="MetOSite" id="Q68FD5"/>
<dbReference type="PhosphoSitePlus" id="Q68FD5"/>
<dbReference type="SwissPalm" id="Q68FD5"/>
<dbReference type="jPOST" id="Q68FD5"/>
<dbReference type="PaxDb" id="10090-ENSMUSP00000099475"/>
<dbReference type="ProteomicsDB" id="283383"/>
<dbReference type="Pumba" id="Q68FD5"/>
<dbReference type="Antibodypedia" id="4164">
    <property type="antibodies" value="490 antibodies from 40 providers"/>
</dbReference>
<dbReference type="DNASU" id="67300"/>
<dbReference type="Ensembl" id="ENSMUST00000103186.11">
    <property type="protein sequence ID" value="ENSMUSP00000099475.5"/>
    <property type="gene ID" value="ENSMUSG00000047126.18"/>
</dbReference>
<dbReference type="GeneID" id="67300"/>
<dbReference type="KEGG" id="mmu:67300"/>
<dbReference type="UCSC" id="uc007kta.1">
    <property type="organism name" value="mouse"/>
</dbReference>
<dbReference type="AGR" id="MGI:2388633"/>
<dbReference type="CTD" id="1213"/>
<dbReference type="MGI" id="MGI:2388633">
    <property type="gene designation" value="Cltc"/>
</dbReference>
<dbReference type="VEuPathDB" id="HostDB:ENSMUSG00000047126"/>
<dbReference type="eggNOG" id="KOG0985">
    <property type="taxonomic scope" value="Eukaryota"/>
</dbReference>
<dbReference type="GeneTree" id="ENSGT00950000183166"/>
<dbReference type="HOGENOM" id="CLU_002136_0_0_1"/>
<dbReference type="InParanoid" id="Q68FD5"/>
<dbReference type="OMA" id="WLKEDKX"/>
<dbReference type="TreeFam" id="TF300059"/>
<dbReference type="Reactome" id="R-MMU-177504">
    <property type="pathway name" value="Retrograde neurotrophin signalling"/>
</dbReference>
<dbReference type="Reactome" id="R-MMU-190873">
    <property type="pathway name" value="Gap junction degradation"/>
</dbReference>
<dbReference type="Reactome" id="R-MMU-196025">
    <property type="pathway name" value="Formation of annular gap junctions"/>
</dbReference>
<dbReference type="Reactome" id="R-MMU-2132295">
    <property type="pathway name" value="MHC class II antigen presentation"/>
</dbReference>
<dbReference type="Reactome" id="R-MMU-432720">
    <property type="pathway name" value="Lysosome Vesicle Biogenesis"/>
</dbReference>
<dbReference type="Reactome" id="R-MMU-432722">
    <property type="pathway name" value="Golgi Associated Vesicle Biogenesis"/>
</dbReference>
<dbReference type="Reactome" id="R-MMU-437239">
    <property type="pathway name" value="Recycling pathway of L1"/>
</dbReference>
<dbReference type="Reactome" id="R-MMU-5099900">
    <property type="pathway name" value="WNT5A-dependent internalization of FZD4"/>
</dbReference>
<dbReference type="Reactome" id="R-MMU-5140745">
    <property type="pathway name" value="WNT5A-dependent internalization of FZD2, FZD5 and ROR2"/>
</dbReference>
<dbReference type="Reactome" id="R-MMU-8856825">
    <property type="pathway name" value="Cargo recognition for clathrin-mediated endocytosis"/>
</dbReference>
<dbReference type="Reactome" id="R-MMU-8856828">
    <property type="pathway name" value="Clathrin-mediated endocytosis"/>
</dbReference>
<dbReference type="Reactome" id="R-MMU-8866427">
    <property type="pathway name" value="VLDLR internalisation and degradation"/>
</dbReference>
<dbReference type="Reactome" id="R-MMU-8964038">
    <property type="pathway name" value="LDL clearance"/>
</dbReference>
<dbReference type="Reactome" id="R-MMU-9013420">
    <property type="pathway name" value="RHOU GTPase cycle"/>
</dbReference>
<dbReference type="Reactome" id="R-MMU-9013424">
    <property type="pathway name" value="RHOV GTPase cycle"/>
</dbReference>
<dbReference type="BioGRID-ORCS" id="67300">
    <property type="hits" value="28 hits in 85 CRISPR screens"/>
</dbReference>
<dbReference type="CD-CODE" id="CE726F99">
    <property type="entry name" value="Postsynaptic density"/>
</dbReference>
<dbReference type="ChiTaRS" id="Cltc">
    <property type="organism name" value="mouse"/>
</dbReference>
<dbReference type="PRO" id="PR:Q68FD5"/>
<dbReference type="Proteomes" id="UP000000589">
    <property type="component" value="Chromosome 11"/>
</dbReference>
<dbReference type="RNAct" id="Q68FD5">
    <property type="molecule type" value="protein"/>
</dbReference>
<dbReference type="Bgee" id="ENSMUSG00000047126">
    <property type="expression patterns" value="Expressed in stroma of bone marrow and 252 other cell types or tissues"/>
</dbReference>
<dbReference type="ExpressionAtlas" id="Q68FD5">
    <property type="expression patterns" value="baseline and differential"/>
</dbReference>
<dbReference type="GO" id="GO:0030132">
    <property type="term" value="C:clathrin coat of coated pit"/>
    <property type="evidence" value="ECO:0007669"/>
    <property type="project" value="InterPro"/>
</dbReference>
<dbReference type="GO" id="GO:0030130">
    <property type="term" value="C:clathrin coat of trans-Golgi network vesicle"/>
    <property type="evidence" value="ECO:0007669"/>
    <property type="project" value="InterPro"/>
</dbReference>
<dbReference type="GO" id="GO:0071439">
    <property type="term" value="C:clathrin complex"/>
    <property type="evidence" value="ECO:0007669"/>
    <property type="project" value="InterPro"/>
</dbReference>
<dbReference type="GO" id="GO:0005905">
    <property type="term" value="C:clathrin-coated pit"/>
    <property type="evidence" value="ECO:0000314"/>
    <property type="project" value="MGI"/>
</dbReference>
<dbReference type="GO" id="GO:0098978">
    <property type="term" value="C:glutamatergic synapse"/>
    <property type="evidence" value="ECO:0000314"/>
    <property type="project" value="SynGO"/>
</dbReference>
<dbReference type="GO" id="GO:0042470">
    <property type="term" value="C:melanosome"/>
    <property type="evidence" value="ECO:0007669"/>
    <property type="project" value="UniProtKB-SubCell"/>
</dbReference>
<dbReference type="GO" id="GO:0016020">
    <property type="term" value="C:membrane"/>
    <property type="evidence" value="ECO:0000315"/>
    <property type="project" value="ParkinsonsUK-UCL"/>
</dbReference>
<dbReference type="GO" id="GO:0030117">
    <property type="term" value="C:membrane coat"/>
    <property type="evidence" value="ECO:0000314"/>
    <property type="project" value="MGI"/>
</dbReference>
<dbReference type="GO" id="GO:0005739">
    <property type="term" value="C:mitochondrion"/>
    <property type="evidence" value="ECO:0007005"/>
    <property type="project" value="MGI"/>
</dbReference>
<dbReference type="GO" id="GO:0031523">
    <property type="term" value="C:Myb complex"/>
    <property type="evidence" value="ECO:0000266"/>
    <property type="project" value="MGI"/>
</dbReference>
<dbReference type="GO" id="GO:0043209">
    <property type="term" value="C:myelin sheath"/>
    <property type="evidence" value="ECO:0007005"/>
    <property type="project" value="UniProtKB"/>
</dbReference>
<dbReference type="GO" id="GO:0098684">
    <property type="term" value="C:photoreceptor ribbon synapse"/>
    <property type="evidence" value="ECO:0000314"/>
    <property type="project" value="SynGO"/>
</dbReference>
<dbReference type="GO" id="GO:0098843">
    <property type="term" value="C:postsynaptic endocytic zone"/>
    <property type="evidence" value="ECO:0000314"/>
    <property type="project" value="SynGO"/>
</dbReference>
<dbReference type="GO" id="GO:0098835">
    <property type="term" value="C:presynaptic endocytic zone membrane"/>
    <property type="evidence" value="ECO:0000314"/>
    <property type="project" value="SynGO"/>
</dbReference>
<dbReference type="GO" id="GO:0032991">
    <property type="term" value="C:protein-containing complex"/>
    <property type="evidence" value="ECO:0000266"/>
    <property type="project" value="MGI"/>
</dbReference>
<dbReference type="GO" id="GO:0005819">
    <property type="term" value="C:spindle"/>
    <property type="evidence" value="ECO:0007669"/>
    <property type="project" value="UniProtKB-SubCell"/>
</dbReference>
<dbReference type="GO" id="GO:0032051">
    <property type="term" value="F:clathrin light chain binding"/>
    <property type="evidence" value="ECO:0007669"/>
    <property type="project" value="InterPro"/>
</dbReference>
<dbReference type="GO" id="GO:0003725">
    <property type="term" value="F:double-stranded RNA binding"/>
    <property type="evidence" value="ECO:0000266"/>
    <property type="project" value="MGI"/>
</dbReference>
<dbReference type="GO" id="GO:0019901">
    <property type="term" value="F:protein kinase binding"/>
    <property type="evidence" value="ECO:0000353"/>
    <property type="project" value="ParkinsonsUK-UCL"/>
</dbReference>
<dbReference type="GO" id="GO:0005198">
    <property type="term" value="F:structural molecule activity"/>
    <property type="evidence" value="ECO:0007669"/>
    <property type="project" value="InterPro"/>
</dbReference>
<dbReference type="GO" id="GO:0006914">
    <property type="term" value="P:autophagy"/>
    <property type="evidence" value="ECO:0007669"/>
    <property type="project" value="UniProtKB-KW"/>
</dbReference>
<dbReference type="GO" id="GO:0051301">
    <property type="term" value="P:cell division"/>
    <property type="evidence" value="ECO:0007669"/>
    <property type="project" value="UniProtKB-KW"/>
</dbReference>
<dbReference type="GO" id="GO:0072318">
    <property type="term" value="P:clathrin coat disassembly"/>
    <property type="evidence" value="ECO:0000250"/>
    <property type="project" value="UniProtKB"/>
</dbReference>
<dbReference type="GO" id="GO:0006886">
    <property type="term" value="P:intracellular protein transport"/>
    <property type="evidence" value="ECO:0007669"/>
    <property type="project" value="InterPro"/>
</dbReference>
<dbReference type="GO" id="GO:0090307">
    <property type="term" value="P:mitotic spindle assembly"/>
    <property type="evidence" value="ECO:0000266"/>
    <property type="project" value="MGI"/>
</dbReference>
<dbReference type="GO" id="GO:1900126">
    <property type="term" value="P:negative regulation of hyaluronan biosynthetic process"/>
    <property type="evidence" value="ECO:0000250"/>
    <property type="project" value="UniProtKB"/>
</dbReference>
<dbReference type="FunFam" id="1.25.40.10:FF:000001">
    <property type="entry name" value="Clathrin heavy chain"/>
    <property type="match status" value="1"/>
</dbReference>
<dbReference type="FunFam" id="1.25.40.10:FF:000002">
    <property type="entry name" value="Clathrin heavy chain"/>
    <property type="match status" value="1"/>
</dbReference>
<dbReference type="FunFam" id="1.25.40.10:FF:000007">
    <property type="entry name" value="Clathrin heavy chain"/>
    <property type="match status" value="1"/>
</dbReference>
<dbReference type="FunFam" id="1.25.40.10:FF:000095">
    <property type="entry name" value="Clathrin heavy chain"/>
    <property type="match status" value="1"/>
</dbReference>
<dbReference type="FunFam" id="1.25.40.730:FF:000001">
    <property type="entry name" value="Clathrin heavy chain"/>
    <property type="match status" value="1"/>
</dbReference>
<dbReference type="FunFam" id="2.130.10.110:FF:000001">
    <property type="entry name" value="Clathrin heavy chain"/>
    <property type="match status" value="1"/>
</dbReference>
<dbReference type="Gene3D" id="1.25.40.730">
    <property type="match status" value="1"/>
</dbReference>
<dbReference type="Gene3D" id="2.130.10.110">
    <property type="entry name" value="Clathrin heavy-chain terminal domain"/>
    <property type="match status" value="1"/>
</dbReference>
<dbReference type="Gene3D" id="1.25.40.10">
    <property type="entry name" value="Tetratricopeptide repeat domain"/>
    <property type="match status" value="4"/>
</dbReference>
<dbReference type="InterPro" id="IPR016024">
    <property type="entry name" value="ARM-type_fold"/>
</dbReference>
<dbReference type="InterPro" id="IPR055358">
    <property type="entry name" value="CHCR"/>
</dbReference>
<dbReference type="InterPro" id="IPR000547">
    <property type="entry name" value="Clathrin_H-chain/VPS_repeat"/>
</dbReference>
<dbReference type="InterPro" id="IPR015348">
    <property type="entry name" value="Clathrin_H-chain_linker_core"/>
</dbReference>
<dbReference type="InterPro" id="IPR016025">
    <property type="entry name" value="Clathrin_H-chain_N"/>
</dbReference>
<dbReference type="InterPro" id="IPR022365">
    <property type="entry name" value="Clathrin_H-chain_propeller_rpt"/>
</dbReference>
<dbReference type="InterPro" id="IPR016341">
    <property type="entry name" value="Clathrin_heavy_chain"/>
</dbReference>
<dbReference type="InterPro" id="IPR011990">
    <property type="entry name" value="TPR-like_helical_dom_sf"/>
</dbReference>
<dbReference type="PANTHER" id="PTHR10292:SF7">
    <property type="entry name" value="CLATHRIN HEAVY CHAIN 1"/>
    <property type="match status" value="1"/>
</dbReference>
<dbReference type="PANTHER" id="PTHR10292">
    <property type="entry name" value="CLATHRIN HEAVY CHAIN RELATED"/>
    <property type="match status" value="1"/>
</dbReference>
<dbReference type="Pfam" id="PF00637">
    <property type="entry name" value="Clathrin"/>
    <property type="match status" value="7"/>
</dbReference>
<dbReference type="Pfam" id="PF09268">
    <property type="entry name" value="Clathrin-link"/>
    <property type="match status" value="1"/>
</dbReference>
<dbReference type="Pfam" id="PF13838">
    <property type="entry name" value="Clathrin_H_link"/>
    <property type="match status" value="1"/>
</dbReference>
<dbReference type="Pfam" id="PF01394">
    <property type="entry name" value="Clathrin_propel"/>
    <property type="match status" value="5"/>
</dbReference>
<dbReference type="PIRSF" id="PIRSF002290">
    <property type="entry name" value="Clathrin_H_chain"/>
    <property type="match status" value="1"/>
</dbReference>
<dbReference type="SMART" id="SM00299">
    <property type="entry name" value="CLH"/>
    <property type="match status" value="7"/>
</dbReference>
<dbReference type="SUPFAM" id="SSF48371">
    <property type="entry name" value="ARM repeat"/>
    <property type="match status" value="6"/>
</dbReference>
<dbReference type="SUPFAM" id="SSF50989">
    <property type="entry name" value="Clathrin heavy-chain terminal domain"/>
    <property type="match status" value="1"/>
</dbReference>
<dbReference type="PROSITE" id="PS50236">
    <property type="entry name" value="CHCR"/>
    <property type="match status" value="7"/>
</dbReference>
<gene>
    <name evidence="9" type="primary">Cltc</name>
</gene>
<comment type="function">
    <text evidence="2 3 4">Clathrin is the major protein of the polyhedral coat of coated pits and vesicles. Two different adapter protein complexes link the clathrin lattice either to the plasma membrane or to the trans-Golgi network. Acts as a component of the TACC3/ch-TOG/clathrin complex proposed to contribute to stabilization of kinetochore fibers of the mitotic spindle by acting as inter-microtubule bridge. The TACC3/ch-TOG/clathrin complex is required for the maintenance of kinetochore fiber tension. Plays a role in early autophagosome formation. Interaction with DNAJC6 mediates the recruitment of HSPA8 to the clathrin lattice and creates local destabilization of the lattice promoting uncoating (By similarity).</text>
</comment>
<comment type="subunit">
    <text evidence="3 4 6 7">Clathrin triskelions, composed of 3 heavy chains and 3 light chains, are the basic subunits of the clathrin coat (By similarity). In the presence of light chains, hub assembly is influenced by both the pH and the concentration of calcium (By similarity). Interacts with HIP1 (By similarity). Interacts with DENND1A, DENND1B and DENND1C (By similarity). Interacts with ERBB2 (By similarity). Interacts with FKBP6 (By similarity). Interacts with OCRL (PubMed:20133602). Interacts with CKAP5 and TACC3 forming the TACC3/ch-TOG/clathrin complex located at spindle inter-microtubules bridges; the complex implicates clathrin triskelions; TACC3 and CLTC are proposed to form a composite microtubule interaction surface (By similarity). Plays a role in early autophagosome formation (By similarity). Interacts with ATG16L1 (via N-terminus) (By similarity). Interacts with RFTN1; the interaction occurs in response to pathogens (By similarity). Interacts with USP2 isoform 2 (PubMed:26756164). Interacts with TMEM106B (via N-terminus) (By similarity). Interacts with DNAJC6; this interaction produces a local change in heavy-chain contacts, creating a detectable global distortion of the clathrin coat and leads to the recruitment of HSPA8 (By similarity).</text>
</comment>
<comment type="interaction">
    <interactant intactId="EBI-769168">
        <id>Q68FD5</id>
    </interactant>
    <interactant intactId="EBI-6148898">
        <id>Q01968</id>
        <label>OCRL</label>
    </interactant>
    <organismsDiffer>true</organismsDiffer>
    <experiments>2</experiments>
</comment>
<comment type="interaction">
    <interactant intactId="EBI-769168">
        <id>Q68FD5</id>
    </interactant>
    <interactant intactId="EBI-744603">
        <id>Q15637</id>
        <label>SF1</label>
    </interactant>
    <organismsDiffer>true</organismsDiffer>
    <experiments>3</experiments>
</comment>
<comment type="subcellular location">
    <subcellularLocation>
        <location evidence="1">Cytoplasmic vesicle membrane</location>
        <topology evidence="1">Peripheral membrane protein</topology>
        <orientation evidence="1">Cytoplasmic side</orientation>
    </subcellularLocation>
    <subcellularLocation>
        <location evidence="1">Membrane</location>
        <location evidence="1">Coated pit</location>
        <topology evidence="1">Peripheral membrane protein</topology>
        <orientation evidence="1">Cytoplasmic side</orientation>
    </subcellularLocation>
    <subcellularLocation>
        <location evidence="1">Melanosome</location>
    </subcellularLocation>
    <subcellularLocation>
        <location evidence="4">Cytoplasm</location>
        <location evidence="4">Cytoskeleton</location>
        <location evidence="4">Spindle</location>
    </subcellularLocation>
    <text evidence="1 4">Cytoplasmic face of coated pits and vesicles. In complex with TACC3 and CKAP5 (forming the TACC3/ch-TOG/clathrin complex) localized to inter-microtubule bridges in mitotic spindles.</text>
</comment>
<comment type="domain">
    <text evidence="1">The N-terminal seven-bladed beta-propeller is formed by WD40-like repeats, and projects inward from the polyhedral outer clathrin coat. It constitutes a major protein-protein interaction node (By similarity).</text>
</comment>
<comment type="similarity">
    <text evidence="8">Belongs to the clathrin heavy chain family.</text>
</comment>
<feature type="initiator methionine" description="Removed" evidence="4">
    <location>
        <position position="1"/>
    </location>
</feature>
<feature type="chain" id="PRO_0000205779" description="Clathrin heavy chain 1">
    <location>
        <begin position="2"/>
        <end position="1675"/>
    </location>
</feature>
<feature type="repeat" description="CHCR 1">
    <location>
        <begin position="537"/>
        <end position="683"/>
    </location>
</feature>
<feature type="repeat" description="CHCR 2">
    <location>
        <begin position="686"/>
        <end position="828"/>
    </location>
</feature>
<feature type="repeat" description="CHCR 3">
    <location>
        <begin position="833"/>
        <end position="972"/>
    </location>
</feature>
<feature type="repeat" description="CHCR 4">
    <location>
        <begin position="979"/>
        <end position="1124"/>
    </location>
</feature>
<feature type="repeat" description="CHCR 5">
    <location>
        <begin position="1128"/>
        <end position="1269"/>
    </location>
</feature>
<feature type="repeat" description="CHCR 6">
    <location>
        <begin position="1274"/>
        <end position="1420"/>
    </location>
</feature>
<feature type="repeat" description="CHCR 7">
    <location>
        <begin position="1423"/>
        <end position="1566"/>
    </location>
</feature>
<feature type="region of interest" description="Globular terminal domain">
    <location>
        <begin position="2"/>
        <end position="479"/>
    </location>
</feature>
<feature type="region of interest" description="WD40-like repeat 1">
    <location>
        <begin position="24"/>
        <end position="67"/>
    </location>
</feature>
<feature type="region of interest" description="WD40-like repeat 2">
    <location>
        <begin position="68"/>
        <end position="107"/>
    </location>
</feature>
<feature type="region of interest" description="WD40-like repeat 3">
    <location>
        <begin position="108"/>
        <end position="149"/>
    </location>
</feature>
<feature type="region of interest" description="WD40-like repeat 4">
    <location>
        <begin position="150"/>
        <end position="195"/>
    </location>
</feature>
<feature type="region of interest" description="WD40-like repeat 5">
    <location>
        <begin position="196"/>
        <end position="257"/>
    </location>
</feature>
<feature type="region of interest" description="WD40-like repeat 6">
    <location>
        <begin position="258"/>
        <end position="301"/>
    </location>
</feature>
<feature type="region of interest" description="WD40-like repeat 7">
    <location>
        <begin position="302"/>
        <end position="330"/>
    </location>
</feature>
<feature type="region of interest" description="Binding site for the uncoating ATPase, involved in lattice disassembly" evidence="5">
    <location>
        <begin position="449"/>
        <end position="465"/>
    </location>
</feature>
<feature type="region of interest" description="Flexible linker">
    <location>
        <begin position="480"/>
        <end position="523"/>
    </location>
</feature>
<feature type="region of interest" description="Heavy chain arm">
    <location>
        <begin position="524"/>
        <end position="1675"/>
    </location>
</feature>
<feature type="region of interest" description="Distal segment">
    <location>
        <begin position="524"/>
        <end position="634"/>
    </location>
</feature>
<feature type="region of interest" description="Proximal segment">
    <location>
        <begin position="639"/>
        <end position="1675"/>
    </location>
</feature>
<feature type="region of interest" description="Involved in binding clathrin light chain" evidence="1">
    <location>
        <begin position="1213"/>
        <end position="1522"/>
    </location>
</feature>
<feature type="region of interest" description="Trimerization" evidence="1">
    <location>
        <begin position="1550"/>
        <end position="1675"/>
    </location>
</feature>
<feature type="modified residue" description="N-acetylalanine" evidence="4">
    <location>
        <position position="2"/>
    </location>
</feature>
<feature type="modified residue" description="Phosphoserine" evidence="11">
    <location>
        <position position="67"/>
    </location>
</feature>
<feature type="modified residue" description="Phosphothreonine" evidence="11">
    <location>
        <position position="105"/>
    </location>
</feature>
<feature type="modified residue" description="Phosphotyrosine" evidence="10">
    <location>
        <position position="184"/>
    </location>
</feature>
<feature type="modified residue" description="Phosphothreonine" evidence="4">
    <location>
        <position position="394"/>
    </location>
</feature>
<feature type="modified residue" description="Phosphotyrosine" evidence="10">
    <location>
        <position position="634"/>
    </location>
</feature>
<feature type="modified residue" description="N6-succinyllysine" evidence="12">
    <location>
        <position position="737"/>
    </location>
</feature>
<feature type="modified residue" description="N6-acetyllysine" evidence="4">
    <location>
        <position position="856"/>
    </location>
</feature>
<feature type="modified residue" description="Phosphotyrosine" evidence="10">
    <location>
        <position position="899"/>
    </location>
</feature>
<feature type="modified residue" description="Phosphoserine" evidence="11">
    <location>
        <position position="1167"/>
    </location>
</feature>
<feature type="modified residue" description="Phosphotyrosine" evidence="10">
    <location>
        <position position="1206"/>
    </location>
</feature>
<feature type="modified residue" description="Phosphoserine" evidence="4">
    <location>
        <position position="1229"/>
    </location>
</feature>
<feature type="modified residue" description="N6-acetyllysine; alternate" evidence="4">
    <location>
        <position position="1441"/>
    </location>
</feature>
<feature type="modified residue" description="N6-succinyllysine; alternate" evidence="12">
    <location>
        <position position="1441"/>
    </location>
</feature>
<feature type="modified residue" description="Phosphotyrosine" evidence="10">
    <location>
        <position position="1477"/>
    </location>
</feature>
<feature type="modified residue" description="Phosphotyrosine" evidence="10">
    <location>
        <position position="1487"/>
    </location>
</feature>
<feature type="modified residue" description="Phosphoserine" evidence="11">
    <location>
        <position position="1494"/>
    </location>
</feature>
<feature type="modified residue" description="N6-acetyllysine" evidence="4">
    <location>
        <position position="1501"/>
    </location>
</feature>
<feature type="strand" evidence="13">
    <location>
        <begin position="6"/>
        <end position="14"/>
    </location>
</feature>
<feature type="helix" evidence="13">
    <location>
        <begin position="15"/>
        <end position="18"/>
    </location>
</feature>
<feature type="helix" evidence="13">
    <location>
        <begin position="22"/>
        <end position="24"/>
    </location>
</feature>
<feature type="turn" evidence="13">
    <location>
        <begin position="27"/>
        <end position="29"/>
    </location>
</feature>
<feature type="strand" evidence="13">
    <location>
        <begin position="33"/>
        <end position="44"/>
    </location>
</feature>
<feature type="strand" evidence="13">
    <location>
        <begin position="47"/>
        <end position="57"/>
    </location>
</feature>
<feature type="strand" evidence="13">
    <location>
        <begin position="62"/>
        <end position="64"/>
    </location>
</feature>
<feature type="strand" evidence="13">
    <location>
        <begin position="69"/>
        <end position="73"/>
    </location>
</feature>
<feature type="strand" evidence="13">
    <location>
        <begin position="75"/>
        <end position="84"/>
    </location>
</feature>
<feature type="strand" evidence="13">
    <location>
        <begin position="87"/>
        <end position="92"/>
    </location>
</feature>
<feature type="turn" evidence="13">
    <location>
        <begin position="93"/>
        <end position="96"/>
    </location>
</feature>
<feature type="strand" evidence="13">
    <location>
        <begin position="97"/>
        <end position="103"/>
    </location>
</feature>
<feature type="strand" evidence="13">
    <location>
        <begin position="108"/>
        <end position="115"/>
    </location>
</feature>
<feature type="strand" evidence="13">
    <location>
        <begin position="118"/>
        <end position="133"/>
    </location>
</feature>
<feature type="strand" evidence="13">
    <location>
        <begin position="139"/>
        <end position="143"/>
    </location>
</feature>
<feature type="helix" evidence="13">
    <location>
        <begin position="146"/>
        <end position="148"/>
    </location>
</feature>
<feature type="strand" evidence="13">
    <location>
        <begin position="152"/>
        <end position="158"/>
    </location>
</feature>
<feature type="strand" evidence="13">
    <location>
        <begin position="164"/>
        <end position="172"/>
    </location>
</feature>
<feature type="strand" evidence="13">
    <location>
        <begin position="174"/>
        <end position="185"/>
    </location>
</feature>
<feature type="turn" evidence="13">
    <location>
        <begin position="186"/>
        <end position="189"/>
    </location>
</feature>
<feature type="strand" evidence="13">
    <location>
        <begin position="190"/>
        <end position="194"/>
    </location>
</feature>
<feature type="strand" evidence="13">
    <location>
        <begin position="197"/>
        <end position="204"/>
    </location>
</feature>
<feature type="strand" evidence="13">
    <location>
        <begin position="213"/>
        <end position="222"/>
    </location>
</feature>
<feature type="strand" evidence="13">
    <location>
        <begin position="225"/>
        <end position="232"/>
    </location>
</feature>
<feature type="strand" evidence="13">
    <location>
        <begin position="246"/>
        <end position="249"/>
    </location>
</feature>
<feature type="strand" evidence="13">
    <location>
        <begin position="261"/>
        <end position="267"/>
    </location>
</feature>
<feature type="turn" evidence="13">
    <location>
        <begin position="268"/>
        <end position="271"/>
    </location>
</feature>
<feature type="strand" evidence="13">
    <location>
        <begin position="272"/>
        <end position="277"/>
    </location>
</feature>
<feature type="strand" evidence="13">
    <location>
        <begin position="280"/>
        <end position="286"/>
    </location>
</feature>
<feature type="turn" evidence="13">
    <location>
        <begin position="287"/>
        <end position="289"/>
    </location>
</feature>
<feature type="strand" evidence="13">
    <location>
        <begin position="292"/>
        <end position="297"/>
    </location>
</feature>
<feature type="strand" evidence="13">
    <location>
        <begin position="305"/>
        <end position="309"/>
    </location>
</feature>
<feature type="turn" evidence="13">
    <location>
        <begin position="310"/>
        <end position="313"/>
    </location>
</feature>
<feature type="strand" evidence="13">
    <location>
        <begin position="314"/>
        <end position="318"/>
    </location>
</feature>
<feature type="strand" evidence="13">
    <location>
        <begin position="322"/>
        <end position="329"/>
    </location>
</feature>
<feature type="turn" evidence="13">
    <location>
        <begin position="331"/>
        <end position="333"/>
    </location>
</feature>
<feature type="helix" evidence="13">
    <location>
        <begin position="334"/>
        <end position="340"/>
    </location>
</feature>
<feature type="helix" evidence="13">
    <location>
        <begin position="345"/>
        <end position="354"/>
    </location>
</feature>
<feature type="helix" evidence="13">
    <location>
        <begin position="361"/>
        <end position="373"/>
    </location>
</feature>
<feature type="helix" evidence="13">
    <location>
        <begin position="377"/>
        <end position="385"/>
    </location>
</feature>
<feature type="helix" evidence="13">
    <location>
        <begin position="395"/>
        <end position="402"/>
    </location>
</feature>
<feature type="strand" evidence="13">
    <location>
        <begin position="408"/>
        <end position="410"/>
    </location>
</feature>
<feature type="helix" evidence="13">
    <location>
        <begin position="413"/>
        <end position="424"/>
    </location>
</feature>
<feature type="helix" evidence="13">
    <location>
        <begin position="429"/>
        <end position="441"/>
    </location>
</feature>
<feature type="helix" evidence="13">
    <location>
        <begin position="446"/>
        <end position="453"/>
    </location>
</feature>
<feature type="helix" evidence="13">
    <location>
        <begin position="461"/>
        <end position="468"/>
    </location>
</feature>
<feature type="helix" evidence="13">
    <location>
        <begin position="472"/>
        <end position="481"/>
    </location>
</feature>
<feature type="helix" evidence="13">
    <location>
        <begin position="485"/>
        <end position="494"/>
    </location>
</feature>
<feature type="helix" evidence="13">
    <location>
        <begin position="498"/>
        <end position="508"/>
    </location>
</feature>
<feature type="helix" evidence="13">
    <location>
        <begin position="514"/>
        <end position="524"/>
    </location>
</feature>
<feature type="helix" evidence="13">
    <location>
        <begin position="526"/>
        <end position="536"/>
    </location>
</feature>
<feature type="strand" evidence="13">
    <location>
        <begin position="539"/>
        <end position="541"/>
    </location>
</feature>
<feature type="helix" evidence="13">
    <location>
        <begin position="546"/>
        <end position="555"/>
    </location>
</feature>
<feature type="helix" evidence="13">
    <location>
        <begin position="559"/>
        <end position="573"/>
    </location>
</feature>
<evidence type="ECO:0000250" key="1"/>
<evidence type="ECO:0000250" key="2">
    <source>
        <dbReference type="UniProtKB" id="P11442"/>
    </source>
</evidence>
<evidence type="ECO:0000250" key="3">
    <source>
        <dbReference type="UniProtKB" id="P49951"/>
    </source>
</evidence>
<evidence type="ECO:0000250" key="4">
    <source>
        <dbReference type="UniProtKB" id="Q00610"/>
    </source>
</evidence>
<evidence type="ECO:0000255" key="5"/>
<evidence type="ECO:0000269" key="6">
    <source>
    </source>
</evidence>
<evidence type="ECO:0000269" key="7">
    <source>
    </source>
</evidence>
<evidence type="ECO:0000305" key="8"/>
<evidence type="ECO:0000312" key="9">
    <source>
        <dbReference type="MGI" id="MGI:2388633"/>
    </source>
</evidence>
<evidence type="ECO:0007744" key="10">
    <source>
    </source>
</evidence>
<evidence type="ECO:0007744" key="11">
    <source>
    </source>
</evidence>
<evidence type="ECO:0007744" key="12">
    <source>
    </source>
</evidence>
<evidence type="ECO:0007829" key="13">
    <source>
        <dbReference type="PDB" id="5ODS"/>
    </source>
</evidence>
<sequence length="1675" mass="191557">MAQILPIRFQEHLQLQNLGINPANIGFSTLTMESDKFICIREKVGEQAQVVIIDMNDPSNPIRRPISADSAIMNPASKVIALKAGKTLQIFNIEMKSKMKAHTMTDDVTFWKWISLNTVALVTDNAVYHWSMEGESQPVKMFDRHSSLAGCQIINYRTDAKQKWLLLTGISAQQNRVVGAMQLYSVDRKVSQPIEGHAASFAQFKMEGNAEESTLFCFAVRGQAGGKLHIIEVGTPPTGNQPFPKKAVDVFFPPEAQNDFPVAMQISEKHDVVFLITKYGYIHLYDLETGTCIYMNRISGETIFVTAPHEATAGIIGVNRKGQVLSVCVEEENIIPYITNVLQNPDLALRMAVRNNLAGAEELFARKFNALFAQGNYSEAAKVAANAPKGILRTPDTIRRFQSVPAQPGQTSPLLQYFGILLDQGQLNKYESLELCRPVLQQGRKQLLEKWLKEDKLECSEELGDLVKSVDPTLALSVYLRANVPNKVIQCFAETGQVQKIVLYAKKVGYTPDWIFLLRNVMRISPDQGQQFAQMLVQDEEPLADITQIVDVFMEYNLIQQCTAFLLDALKNNRPSEGPLQTRLLEMNLMHAPQVADAILGNQMFTHYDRAHIAQLCEKAGLLQRALEHFTDLYDIKRAVVHTHLLNPEWLVNYFGSLSVEDSLECLRAMLSANIRQNLQICVQVASKYHEQLSTQSLIELFESFKSFEGLFYFLGSIVNFSQDPDVHFKYIQAACKTGQIKEVERICRESNCYDPERVKNFLKEAKLTDQLPLIIVCDRFDFVHDLVLYLYRNNLQKYIEIYVQKVNPSRLPVVIGGLLDVDCSEDVIKNLILVVRGQFSTDELVAEVEKRNRLKLLLPWLEARIHEGCEEPATHNALAKIYIDSNNNPERFLRENPYYDSRVVGKYCEKRDPHLACVAYERGQCDLELINVCNENSLFKSLSRYLVRRKDPELWGSVLLESNPYRRPLIDQVVQTALSETQDPEEVSVTVKAFMTADLPNELIELLEKIVLDNSVFSEHRNLQNLLILTAIKADRTRVMEYINRLDNYDAPDIANIAISNELFEEAFAIFRKFDVNTSAVQVLIEHIGNLDRAYEFAERCNEPAVWSQLAKAQLQKGMVKEAIDSYIKADDPSSYMEVVQAANASGNWEELVKYLQMARKKARESYVETELIFALAKTNRLAELEEFINGPNNAHIQQVGDRCYDEKMYDAAKLLYNNVSNFGRLASTLVHLGEYQAAVDGARKANSTRTWKEVCFACVDGKEFRLAQMCGLHIVVHADELEELINYYQDRGYFEELITMLEAALGLERAHMGMFTELAILYSKFKPQKMREHLELFWSRVNIPKVLRAAEQAHLWAELVFLYDKYEEYDNAIITMMNHPTDAWKEGQFKDIITKVANVELYYKAIQFYLEFKPLLLNDLLMVLSPRLDHTRAVNYFSKVKQLPLVKPYLRSVQNHNNKSVNESLNNLFITEEDYQALRTSIDAYDNFDNISLAQRLEKHELIEFRRIAAYLFKGNNRWKQSVELCKKDSLYKDAMQYASESKDTELAEELLQWFLQEEKRECFGACLFTCYDLLRPDVVLETAWRHNIMDFAMPYFIQVMKEYLTKVDKLDASESLRKEEEQATETQPIVYGQPQLMLTAGPSVAVPPQAPFGYGYTAPPYGQPQPGFGYSM</sequence>
<proteinExistence type="evidence at protein level"/>
<accession>Q68FD5</accession>
<protein>
    <recommendedName>
        <fullName evidence="4">Clathrin heavy chain 1</fullName>
    </recommendedName>
</protein>
<name>CLH1_MOUSE</name>
<organism>
    <name type="scientific">Mus musculus</name>
    <name type="common">Mouse</name>
    <dbReference type="NCBI Taxonomy" id="10090"/>
    <lineage>
        <taxon>Eukaryota</taxon>
        <taxon>Metazoa</taxon>
        <taxon>Chordata</taxon>
        <taxon>Craniata</taxon>
        <taxon>Vertebrata</taxon>
        <taxon>Euteleostomi</taxon>
        <taxon>Mammalia</taxon>
        <taxon>Eutheria</taxon>
        <taxon>Euarchontoglires</taxon>
        <taxon>Glires</taxon>
        <taxon>Rodentia</taxon>
        <taxon>Myomorpha</taxon>
        <taxon>Muroidea</taxon>
        <taxon>Muridae</taxon>
        <taxon>Murinae</taxon>
        <taxon>Mus</taxon>
        <taxon>Mus</taxon>
    </lineage>
</organism>